<feature type="chain" id="PRO_1000062101" description="Flagellar transcriptional regulator FlhD">
    <location>
        <begin position="1"/>
        <end position="116"/>
    </location>
</feature>
<feature type="disulfide bond" description="Interchain" evidence="1">
    <location>
        <position position="65"/>
    </location>
</feature>
<keyword id="KW-0010">Activator</keyword>
<keyword id="KW-1005">Bacterial flagellum biogenesis</keyword>
<keyword id="KW-0963">Cytoplasm</keyword>
<keyword id="KW-1015">Disulfide bond</keyword>
<keyword id="KW-0238">DNA-binding</keyword>
<keyword id="KW-0804">Transcription</keyword>
<keyword id="KW-0805">Transcription regulation</keyword>
<proteinExistence type="inferred from homology"/>
<protein>
    <recommendedName>
        <fullName evidence="1">Flagellar transcriptional regulator FlhD</fullName>
    </recommendedName>
</protein>
<comment type="function">
    <text evidence="1">Functions in complex with FlhC as a master transcriptional regulator that regulates transcription of several flagellar and non-flagellar operons by binding to their promoter region. Activates expression of class 2 flagellar genes, including fliA, which is a flagellum-specific sigma factor that turns on the class 3 genes. Also regulates genes whose products function in a variety of physiological pathways.</text>
</comment>
<comment type="subunit">
    <text evidence="1">Homodimer; disulfide-linked. Forms a heterohexamer composed of two FlhC and four FlhD subunits. Each FlhC binds a FlhD dimer, forming a heterotrimer, and a hexamer assembles by dimerization of two heterotrimers.</text>
</comment>
<comment type="subcellular location">
    <subcellularLocation>
        <location evidence="1">Cytoplasm</location>
    </subcellularLocation>
</comment>
<comment type="domain">
    <text evidence="1">The C-terminal region contains a putative helix-turn-helix (HTH) motif, suggesting that this region may bind DNA.</text>
</comment>
<comment type="similarity">
    <text evidence="1">Belongs to the FlhD family.</text>
</comment>
<reference key="1">
    <citation type="submission" date="2007-09" db="EMBL/GenBank/DDBJ databases">
        <title>Complete sequence of chromosome of Serratia proteamaculans 568.</title>
        <authorList>
            <consortium name="US DOE Joint Genome Institute"/>
            <person name="Copeland A."/>
            <person name="Lucas S."/>
            <person name="Lapidus A."/>
            <person name="Barry K."/>
            <person name="Glavina del Rio T."/>
            <person name="Dalin E."/>
            <person name="Tice H."/>
            <person name="Pitluck S."/>
            <person name="Chain P."/>
            <person name="Malfatti S."/>
            <person name="Shin M."/>
            <person name="Vergez L."/>
            <person name="Schmutz J."/>
            <person name="Larimer F."/>
            <person name="Land M."/>
            <person name="Hauser L."/>
            <person name="Kyrpides N."/>
            <person name="Kim E."/>
            <person name="Taghavi S."/>
            <person name="Newman L."/>
            <person name="Vangronsveld J."/>
            <person name="van der Lelie D."/>
            <person name="Richardson P."/>
        </authorList>
    </citation>
    <scope>NUCLEOTIDE SEQUENCE [LARGE SCALE GENOMIC DNA]</scope>
    <source>
        <strain>568</strain>
    </source>
</reference>
<dbReference type="EMBL" id="CP000826">
    <property type="protein sequence ID" value="ABV42090.1"/>
    <property type="molecule type" value="Genomic_DNA"/>
</dbReference>
<dbReference type="SMR" id="A8GG50"/>
<dbReference type="STRING" id="399741.Spro_2989"/>
<dbReference type="KEGG" id="spe:Spro_2989"/>
<dbReference type="eggNOG" id="ENOG5031P80">
    <property type="taxonomic scope" value="Bacteria"/>
</dbReference>
<dbReference type="HOGENOM" id="CLU_144160_0_0_6"/>
<dbReference type="OrthoDB" id="5298036at2"/>
<dbReference type="GO" id="GO:0005737">
    <property type="term" value="C:cytoplasm"/>
    <property type="evidence" value="ECO:0007669"/>
    <property type="project" value="UniProtKB-SubCell"/>
</dbReference>
<dbReference type="GO" id="GO:0003677">
    <property type="term" value="F:DNA binding"/>
    <property type="evidence" value="ECO:0007669"/>
    <property type="project" value="UniProtKB-UniRule"/>
</dbReference>
<dbReference type="GO" id="GO:0044780">
    <property type="term" value="P:bacterial-type flagellum assembly"/>
    <property type="evidence" value="ECO:0007669"/>
    <property type="project" value="InterPro"/>
</dbReference>
<dbReference type="GO" id="GO:0045893">
    <property type="term" value="P:positive regulation of DNA-templated transcription"/>
    <property type="evidence" value="ECO:0007669"/>
    <property type="project" value="InterPro"/>
</dbReference>
<dbReference type="GO" id="GO:1902208">
    <property type="term" value="P:regulation of bacterial-type flagellum assembly"/>
    <property type="evidence" value="ECO:0007669"/>
    <property type="project" value="UniProtKB-UniRule"/>
</dbReference>
<dbReference type="Gene3D" id="1.10.4000.10">
    <property type="entry name" value="Flagellar transcriptional activator FlhD"/>
    <property type="match status" value="1"/>
</dbReference>
<dbReference type="HAMAP" id="MF_00725">
    <property type="entry name" value="FlhD"/>
    <property type="match status" value="1"/>
</dbReference>
<dbReference type="InterPro" id="IPR023559">
    <property type="entry name" value="Flagellar_FlhD"/>
</dbReference>
<dbReference type="InterPro" id="IPR036194">
    <property type="entry name" value="FlhD_sf"/>
</dbReference>
<dbReference type="NCBIfam" id="NF002783">
    <property type="entry name" value="PRK02909.1-1"/>
    <property type="match status" value="1"/>
</dbReference>
<dbReference type="Pfam" id="PF05247">
    <property type="entry name" value="FlhD"/>
    <property type="match status" value="1"/>
</dbReference>
<dbReference type="SUPFAM" id="SSF63592">
    <property type="entry name" value="Flagellar transcriptional activator FlhD"/>
    <property type="match status" value="1"/>
</dbReference>
<accession>A8GG50</accession>
<organism>
    <name type="scientific">Serratia proteamaculans (strain 568)</name>
    <dbReference type="NCBI Taxonomy" id="399741"/>
    <lineage>
        <taxon>Bacteria</taxon>
        <taxon>Pseudomonadati</taxon>
        <taxon>Pseudomonadota</taxon>
        <taxon>Gammaproteobacteria</taxon>
        <taxon>Enterobacterales</taxon>
        <taxon>Yersiniaceae</taxon>
        <taxon>Serratia</taxon>
    </lineage>
</organism>
<gene>
    <name evidence="1" type="primary">flhD</name>
    <name type="ordered locus">Spro_2989</name>
</gene>
<sequence length="116" mass="13125">MGTSELLKHIYDINLSYLLLAQRLINDEKASAMFRLGIDETMADALAQLTLPQMVKLAETNQLVCQFRFNDHQTIERLTKESRVDDLQQIHTGILLSSHLLQELSAKDGSATKKRA</sequence>
<name>FLHD_SERP5</name>
<evidence type="ECO:0000255" key="1">
    <source>
        <dbReference type="HAMAP-Rule" id="MF_00725"/>
    </source>
</evidence>